<protein>
    <recommendedName>
        <fullName evidence="1">Protein RecA</fullName>
    </recommendedName>
    <alternativeName>
        <fullName evidence="1">Recombinase A</fullName>
    </alternativeName>
</protein>
<proteinExistence type="inferred from homology"/>
<sequence length="353" mass="37949">MDDKTSKAAAAEKAKALAAALSQIEKQFGKGSIMRYGDNEVEHDIQVVSTGSLGLDIALGVGGLPRGRVIEVYGPESSGKTTLTLQVIAEMQKLGGTCAFVDAEHALDVQYASKLGVNLTDLLISQPDTGEQALEITDALVRSGSVDLIVIDSVAALVPKAEIEGEMGDSLPGLQARLMSQALRKLTATIKRTNCMVIFINQIRMKIGVMFGNPETTTGGNALKFYSSVRLDIRRIGAIKKGDEVVGNETRVKVVKNKVAPPFKQAEFDIMYGSGISREGEIIDLGVQANVVDKSGAWYSYSGNRIGQGKDNVREYLKEHKEMAIEIENKVRENQGIVSRAATFPASEAEDGE</sequence>
<reference key="1">
    <citation type="journal article" date="1990" name="Nucleic Acids Res.">
        <title>Nucleotide sequence of the recA gene of Bordetella pertussis.</title>
        <authorList>
            <person name="Favre D."/>
            <person name="Viret J.F."/>
        </authorList>
    </citation>
    <scope>NUCLEOTIDE SEQUENCE [GENOMIC DNA]</scope>
    <source>
        <strain>165</strain>
    </source>
</reference>
<reference key="2">
    <citation type="journal article" date="1991" name="Biochimie">
        <title>Cloning of the recA gene of Bordetella pertussis and characterization of its product.</title>
        <authorList>
            <person name="Favre D."/>
            <person name="Cryz S.J. Jr."/>
            <person name="Viret J.F."/>
        </authorList>
    </citation>
    <scope>NUCLEOTIDE SEQUENCE [GENOMIC DNA]</scope>
    <source>
        <strain>165</strain>
    </source>
</reference>
<reference key="3">
    <citation type="journal article" date="2003" name="Nat. Genet.">
        <title>Comparative analysis of the genome sequences of Bordetella pertussis, Bordetella parapertussis and Bordetella bronchiseptica.</title>
        <authorList>
            <person name="Parkhill J."/>
            <person name="Sebaihia M."/>
            <person name="Preston A."/>
            <person name="Murphy L.D."/>
            <person name="Thomson N.R."/>
            <person name="Harris D.E."/>
            <person name="Holden M.T.G."/>
            <person name="Churcher C.M."/>
            <person name="Bentley S.D."/>
            <person name="Mungall K.L."/>
            <person name="Cerdeno-Tarraga A.-M."/>
            <person name="Temple L."/>
            <person name="James K.D."/>
            <person name="Harris B."/>
            <person name="Quail M.A."/>
            <person name="Achtman M."/>
            <person name="Atkin R."/>
            <person name="Baker S."/>
            <person name="Basham D."/>
            <person name="Bason N."/>
            <person name="Cherevach I."/>
            <person name="Chillingworth T."/>
            <person name="Collins M."/>
            <person name="Cronin A."/>
            <person name="Davis P."/>
            <person name="Doggett J."/>
            <person name="Feltwell T."/>
            <person name="Goble A."/>
            <person name="Hamlin N."/>
            <person name="Hauser H."/>
            <person name="Holroyd S."/>
            <person name="Jagels K."/>
            <person name="Leather S."/>
            <person name="Moule S."/>
            <person name="Norberczak H."/>
            <person name="O'Neil S."/>
            <person name="Ormond D."/>
            <person name="Price C."/>
            <person name="Rabbinowitsch E."/>
            <person name="Rutter S."/>
            <person name="Sanders M."/>
            <person name="Saunders D."/>
            <person name="Seeger K."/>
            <person name="Sharp S."/>
            <person name="Simmonds M."/>
            <person name="Skelton J."/>
            <person name="Squares R."/>
            <person name="Squares S."/>
            <person name="Stevens K."/>
            <person name="Unwin L."/>
            <person name="Whitehead S."/>
            <person name="Barrell B.G."/>
            <person name="Maskell D.J."/>
        </authorList>
    </citation>
    <scope>NUCLEOTIDE SEQUENCE [LARGE SCALE GENOMIC DNA]</scope>
    <source>
        <strain>Tohama I / ATCC BAA-589 / NCTC 13251</strain>
    </source>
</reference>
<name>RECA_BORPE</name>
<evidence type="ECO:0000255" key="1">
    <source>
        <dbReference type="HAMAP-Rule" id="MF_00268"/>
    </source>
</evidence>
<evidence type="ECO:0000305" key="2"/>
<gene>
    <name evidence="1" type="primary">recA</name>
    <name type="ordered locus">BP2546</name>
</gene>
<accession>P0A448</accession>
<accession>P17740</accession>
<feature type="chain" id="PRO_0000122668" description="Protein RecA">
    <location>
        <begin position="1"/>
        <end position="353"/>
    </location>
</feature>
<feature type="binding site" evidence="1">
    <location>
        <begin position="74"/>
        <end position="81"/>
    </location>
    <ligand>
        <name>ATP</name>
        <dbReference type="ChEBI" id="CHEBI:30616"/>
    </ligand>
</feature>
<feature type="sequence conflict" description="In Ref. 1 and 2." evidence="2" ref="1 2">
    <original>RGR</original>
    <variation>AA</variation>
    <location>
        <begin position="66"/>
        <end position="68"/>
    </location>
</feature>
<comment type="function">
    <text>Can catalyze the hydrolysis of ATP in the presence of single-stranded DNA, the ATP-dependent uptake of single-stranded DNA by duplex DNA, and the ATP-dependent hybridization of homologous single-stranded DNAs. It interacts with LexA causing its activation and leading to its autocatalytic cleavage.</text>
</comment>
<comment type="subcellular location">
    <subcellularLocation>
        <location evidence="1">Cytoplasm</location>
    </subcellularLocation>
</comment>
<comment type="similarity">
    <text evidence="1">Belongs to the RecA family.</text>
</comment>
<dbReference type="EMBL" id="X53457">
    <property type="protein sequence ID" value="CAA37537.1"/>
    <property type="molecule type" value="Genomic_DNA"/>
</dbReference>
<dbReference type="EMBL" id="BX640418">
    <property type="protein sequence ID" value="CAE42821.1"/>
    <property type="molecule type" value="Genomic_DNA"/>
</dbReference>
<dbReference type="PIR" id="S10499">
    <property type="entry name" value="S10499"/>
</dbReference>
<dbReference type="RefSeq" id="NP_881173.1">
    <property type="nucleotide sequence ID" value="NC_002929.2"/>
</dbReference>
<dbReference type="RefSeq" id="WP_003812760.1">
    <property type="nucleotide sequence ID" value="NZ_CP039022.1"/>
</dbReference>
<dbReference type="SMR" id="P0A448"/>
<dbReference type="STRING" id="257313.BP2546"/>
<dbReference type="PaxDb" id="257313-BP2546"/>
<dbReference type="GeneID" id="93204418"/>
<dbReference type="KEGG" id="bpe:BP2546"/>
<dbReference type="PATRIC" id="fig|257313.5.peg.2746"/>
<dbReference type="eggNOG" id="COG0468">
    <property type="taxonomic scope" value="Bacteria"/>
</dbReference>
<dbReference type="HOGENOM" id="CLU_040469_1_2_4"/>
<dbReference type="Proteomes" id="UP000002676">
    <property type="component" value="Chromosome"/>
</dbReference>
<dbReference type="GO" id="GO:0005829">
    <property type="term" value="C:cytosol"/>
    <property type="evidence" value="ECO:0007669"/>
    <property type="project" value="TreeGrafter"/>
</dbReference>
<dbReference type="GO" id="GO:0005524">
    <property type="term" value="F:ATP binding"/>
    <property type="evidence" value="ECO:0007669"/>
    <property type="project" value="UniProtKB-UniRule"/>
</dbReference>
<dbReference type="GO" id="GO:0016887">
    <property type="term" value="F:ATP hydrolysis activity"/>
    <property type="evidence" value="ECO:0007669"/>
    <property type="project" value="InterPro"/>
</dbReference>
<dbReference type="GO" id="GO:0140664">
    <property type="term" value="F:ATP-dependent DNA damage sensor activity"/>
    <property type="evidence" value="ECO:0007669"/>
    <property type="project" value="InterPro"/>
</dbReference>
<dbReference type="GO" id="GO:0003684">
    <property type="term" value="F:damaged DNA binding"/>
    <property type="evidence" value="ECO:0007669"/>
    <property type="project" value="UniProtKB-UniRule"/>
</dbReference>
<dbReference type="GO" id="GO:0003697">
    <property type="term" value="F:single-stranded DNA binding"/>
    <property type="evidence" value="ECO:0007669"/>
    <property type="project" value="UniProtKB-UniRule"/>
</dbReference>
<dbReference type="GO" id="GO:0006310">
    <property type="term" value="P:DNA recombination"/>
    <property type="evidence" value="ECO:0007669"/>
    <property type="project" value="UniProtKB-UniRule"/>
</dbReference>
<dbReference type="GO" id="GO:0006281">
    <property type="term" value="P:DNA repair"/>
    <property type="evidence" value="ECO:0007669"/>
    <property type="project" value="UniProtKB-UniRule"/>
</dbReference>
<dbReference type="GO" id="GO:0009432">
    <property type="term" value="P:SOS response"/>
    <property type="evidence" value="ECO:0007669"/>
    <property type="project" value="UniProtKB-UniRule"/>
</dbReference>
<dbReference type="CDD" id="cd00983">
    <property type="entry name" value="RecA"/>
    <property type="match status" value="1"/>
</dbReference>
<dbReference type="FunFam" id="3.40.50.300:FF:000087">
    <property type="entry name" value="Recombinase RecA"/>
    <property type="match status" value="1"/>
</dbReference>
<dbReference type="Gene3D" id="3.40.50.300">
    <property type="entry name" value="P-loop containing nucleotide triphosphate hydrolases"/>
    <property type="match status" value="1"/>
</dbReference>
<dbReference type="HAMAP" id="MF_00268">
    <property type="entry name" value="RecA"/>
    <property type="match status" value="1"/>
</dbReference>
<dbReference type="InterPro" id="IPR003593">
    <property type="entry name" value="AAA+_ATPase"/>
</dbReference>
<dbReference type="InterPro" id="IPR013765">
    <property type="entry name" value="DNA_recomb/repair_RecA"/>
</dbReference>
<dbReference type="InterPro" id="IPR020584">
    <property type="entry name" value="DNA_recomb/repair_RecA_CS"/>
</dbReference>
<dbReference type="InterPro" id="IPR027417">
    <property type="entry name" value="P-loop_NTPase"/>
</dbReference>
<dbReference type="InterPro" id="IPR049261">
    <property type="entry name" value="RecA-like_C"/>
</dbReference>
<dbReference type="InterPro" id="IPR049428">
    <property type="entry name" value="RecA-like_N"/>
</dbReference>
<dbReference type="InterPro" id="IPR020588">
    <property type="entry name" value="RecA_ATP-bd"/>
</dbReference>
<dbReference type="InterPro" id="IPR023400">
    <property type="entry name" value="RecA_C_sf"/>
</dbReference>
<dbReference type="InterPro" id="IPR020587">
    <property type="entry name" value="RecA_monomer-monomer_interface"/>
</dbReference>
<dbReference type="NCBIfam" id="TIGR02012">
    <property type="entry name" value="tigrfam_recA"/>
    <property type="match status" value="1"/>
</dbReference>
<dbReference type="PANTHER" id="PTHR45900:SF1">
    <property type="entry name" value="MITOCHONDRIAL DNA REPAIR PROTEIN RECA HOMOLOG-RELATED"/>
    <property type="match status" value="1"/>
</dbReference>
<dbReference type="PANTHER" id="PTHR45900">
    <property type="entry name" value="RECA"/>
    <property type="match status" value="1"/>
</dbReference>
<dbReference type="Pfam" id="PF00154">
    <property type="entry name" value="RecA"/>
    <property type="match status" value="1"/>
</dbReference>
<dbReference type="Pfam" id="PF21096">
    <property type="entry name" value="RecA_C"/>
    <property type="match status" value="1"/>
</dbReference>
<dbReference type="PRINTS" id="PR00142">
    <property type="entry name" value="RECA"/>
</dbReference>
<dbReference type="SMART" id="SM00382">
    <property type="entry name" value="AAA"/>
    <property type="match status" value="1"/>
</dbReference>
<dbReference type="SUPFAM" id="SSF52540">
    <property type="entry name" value="P-loop containing nucleoside triphosphate hydrolases"/>
    <property type="match status" value="1"/>
</dbReference>
<dbReference type="SUPFAM" id="SSF54752">
    <property type="entry name" value="RecA protein, C-terminal domain"/>
    <property type="match status" value="1"/>
</dbReference>
<dbReference type="PROSITE" id="PS00321">
    <property type="entry name" value="RECA_1"/>
    <property type="match status" value="1"/>
</dbReference>
<dbReference type="PROSITE" id="PS50162">
    <property type="entry name" value="RECA_2"/>
    <property type="match status" value="1"/>
</dbReference>
<dbReference type="PROSITE" id="PS50163">
    <property type="entry name" value="RECA_3"/>
    <property type="match status" value="1"/>
</dbReference>
<keyword id="KW-0067">ATP-binding</keyword>
<keyword id="KW-0963">Cytoplasm</keyword>
<keyword id="KW-0227">DNA damage</keyword>
<keyword id="KW-0233">DNA recombination</keyword>
<keyword id="KW-0234">DNA repair</keyword>
<keyword id="KW-0238">DNA-binding</keyword>
<keyword id="KW-0547">Nucleotide-binding</keyword>
<keyword id="KW-1185">Reference proteome</keyword>
<keyword id="KW-0742">SOS response</keyword>
<organism>
    <name type="scientific">Bordetella pertussis (strain Tohama I / ATCC BAA-589 / NCTC 13251)</name>
    <dbReference type="NCBI Taxonomy" id="257313"/>
    <lineage>
        <taxon>Bacteria</taxon>
        <taxon>Pseudomonadati</taxon>
        <taxon>Pseudomonadota</taxon>
        <taxon>Betaproteobacteria</taxon>
        <taxon>Burkholderiales</taxon>
        <taxon>Alcaligenaceae</taxon>
        <taxon>Bordetella</taxon>
    </lineage>
</organism>